<feature type="chain" id="PRO_0000365130" description="Eukaryotic translation initiation factor 3 subunit J">
    <location>
        <begin position="1"/>
        <end position="241"/>
    </location>
</feature>
<feature type="region of interest" description="Disordered" evidence="2">
    <location>
        <begin position="1"/>
        <end position="94"/>
    </location>
</feature>
<feature type="coiled-coil region" evidence="1">
    <location>
        <begin position="61"/>
        <end position="118"/>
    </location>
</feature>
<feature type="compositionally biased region" description="Acidic residues" evidence="2">
    <location>
        <begin position="26"/>
        <end position="45"/>
    </location>
</feature>
<feature type="compositionally biased region" description="Basic and acidic residues" evidence="2">
    <location>
        <begin position="66"/>
        <end position="89"/>
    </location>
</feature>
<comment type="function">
    <text evidence="1">Component of the eukaryotic translation initiation factor 3 (eIF-3) complex, which is involved in protein synthesis of a specialized repertoire of mRNAs and, together with other initiation factors, stimulates binding of mRNA and methionyl-tRNAi to the 40S ribosome. The eIF-3 complex specifically targets and initiates translation of a subset of mRNAs involved in cell proliferation.</text>
</comment>
<comment type="subunit">
    <text evidence="1">Component of the eukaryotic translation initiation factor 3 (eIF-3) complex.</text>
</comment>
<comment type="subcellular location">
    <subcellularLocation>
        <location evidence="1">Cytoplasm</location>
    </subcellularLocation>
</comment>
<comment type="similarity">
    <text evidence="1">Belongs to the eIF-3 subunit J family.</text>
</comment>
<proteinExistence type="evidence at transcript level"/>
<dbReference type="EMBL" id="DQ645463">
    <property type="protein sequence ID" value="ABG54291.1"/>
    <property type="molecule type" value="mRNA"/>
</dbReference>
<dbReference type="RefSeq" id="NP_001037664.1">
    <property type="nucleotide sequence ID" value="NM_001044199.1"/>
</dbReference>
<dbReference type="SMR" id="Q0ZB73"/>
<dbReference type="FunCoup" id="Q0ZB73">
    <property type="interactions" value="1389"/>
</dbReference>
<dbReference type="STRING" id="7091.Q0ZB73"/>
<dbReference type="PaxDb" id="7091-BGIBMGA004175-TA"/>
<dbReference type="EnsemblMetazoa" id="NM_001044199.1">
    <property type="protein sequence ID" value="NP_001037664.1"/>
    <property type="gene ID" value="LOC733089"/>
</dbReference>
<dbReference type="GeneID" id="733089"/>
<dbReference type="KEGG" id="bmor:733089"/>
<dbReference type="CTD" id="8669"/>
<dbReference type="eggNOG" id="KOG4813">
    <property type="taxonomic scope" value="Eukaryota"/>
</dbReference>
<dbReference type="HOGENOM" id="CLU_085806_2_0_1"/>
<dbReference type="InParanoid" id="Q0ZB73"/>
<dbReference type="OMA" id="KPHYALW"/>
<dbReference type="OrthoDB" id="616200at7088"/>
<dbReference type="Proteomes" id="UP000005204">
    <property type="component" value="Unassembled WGS sequence"/>
</dbReference>
<dbReference type="GO" id="GO:0016282">
    <property type="term" value="C:eukaryotic 43S preinitiation complex"/>
    <property type="evidence" value="ECO:0007669"/>
    <property type="project" value="UniProtKB-UniRule"/>
</dbReference>
<dbReference type="GO" id="GO:0033290">
    <property type="term" value="C:eukaryotic 48S preinitiation complex"/>
    <property type="evidence" value="ECO:0007669"/>
    <property type="project" value="UniProtKB-UniRule"/>
</dbReference>
<dbReference type="GO" id="GO:0005852">
    <property type="term" value="C:eukaryotic translation initiation factor 3 complex"/>
    <property type="evidence" value="ECO:0007669"/>
    <property type="project" value="UniProtKB-UniRule"/>
</dbReference>
<dbReference type="GO" id="GO:0003743">
    <property type="term" value="F:translation initiation factor activity"/>
    <property type="evidence" value="ECO:0007669"/>
    <property type="project" value="UniProtKB-UniRule"/>
</dbReference>
<dbReference type="GO" id="GO:0001732">
    <property type="term" value="P:formation of cytoplasmic translation initiation complex"/>
    <property type="evidence" value="ECO:0007669"/>
    <property type="project" value="UniProtKB-UniRule"/>
</dbReference>
<dbReference type="Gene3D" id="1.10.246.60">
    <property type="entry name" value="Eukaryotic translation initiation factor 3 like domains"/>
    <property type="match status" value="1"/>
</dbReference>
<dbReference type="HAMAP" id="MF_03009">
    <property type="entry name" value="eIF3j"/>
    <property type="match status" value="1"/>
</dbReference>
<dbReference type="InterPro" id="IPR023194">
    <property type="entry name" value="eIF3-like_dom_sf"/>
</dbReference>
<dbReference type="InterPro" id="IPR013906">
    <property type="entry name" value="eIF3j"/>
</dbReference>
<dbReference type="PANTHER" id="PTHR21681">
    <property type="entry name" value="EUKARYOTIC TRANSLATION INITIATION FACTOR 3 SUBUNIT J"/>
    <property type="match status" value="1"/>
</dbReference>
<dbReference type="PANTHER" id="PTHR21681:SF0">
    <property type="entry name" value="EUKARYOTIC TRANSLATION INITIATION FACTOR 3 SUBUNIT J"/>
    <property type="match status" value="1"/>
</dbReference>
<dbReference type="Pfam" id="PF08597">
    <property type="entry name" value="eIF3_subunit"/>
    <property type="match status" value="1"/>
</dbReference>
<protein>
    <recommendedName>
        <fullName evidence="1">Eukaryotic translation initiation factor 3 subunit J</fullName>
        <shortName evidence="1">eIF3j</shortName>
    </recommendedName>
</protein>
<organism>
    <name type="scientific">Bombyx mori</name>
    <name type="common">Silk moth</name>
    <dbReference type="NCBI Taxonomy" id="7091"/>
    <lineage>
        <taxon>Eukaryota</taxon>
        <taxon>Metazoa</taxon>
        <taxon>Ecdysozoa</taxon>
        <taxon>Arthropoda</taxon>
        <taxon>Hexapoda</taxon>
        <taxon>Insecta</taxon>
        <taxon>Pterygota</taxon>
        <taxon>Neoptera</taxon>
        <taxon>Endopterygota</taxon>
        <taxon>Lepidoptera</taxon>
        <taxon>Glossata</taxon>
        <taxon>Ditrysia</taxon>
        <taxon>Bombycoidea</taxon>
        <taxon>Bombycidae</taxon>
        <taxon>Bombycinae</taxon>
        <taxon>Bombyx</taxon>
    </lineage>
</organism>
<reference key="1">
    <citation type="submission" date="2006-05" db="EMBL/GenBank/DDBJ databases">
        <title>Translation initiation factors in Bombyx mori.</title>
        <authorList>
            <person name="Wang L.-L."/>
            <person name="Chen K.-P."/>
            <person name="Yao Q."/>
            <person name="Hu Z.-G."/>
            <person name="Chen H.-Q."/>
        </authorList>
    </citation>
    <scope>NUCLEOTIDE SEQUENCE [MRNA]</scope>
</reference>
<sequence length="241" mass="28024">MDVSWDADNFEPKLPTTLAASNKWEGEDEDDNVKESWEDEEEEKKDEEKTEAAPPPQPKPKKKIHDKIAERERQEREKAERLVTEKTAEEMTPEQKLAEKLRQQKLQEESDLRLAMETFGVTEGNIGKLDNFHPTTKEEYTEFADLLTKKITFYKAKDEFPGFIDDLVKNILVQMSSADIRRIKLTVDNLYIEKQKAEKNDKTKKATKGKGKAKLKLEGDNAHLNQYESYGNFDDDYDDFI</sequence>
<accession>Q0ZB73</accession>
<keyword id="KW-0175">Coiled coil</keyword>
<keyword id="KW-0963">Cytoplasm</keyword>
<keyword id="KW-0396">Initiation factor</keyword>
<keyword id="KW-0648">Protein biosynthesis</keyword>
<keyword id="KW-1185">Reference proteome</keyword>
<name>EIF3J_BOMMO</name>
<evidence type="ECO:0000255" key="1">
    <source>
        <dbReference type="HAMAP-Rule" id="MF_03009"/>
    </source>
</evidence>
<evidence type="ECO:0000256" key="2">
    <source>
        <dbReference type="SAM" id="MobiDB-lite"/>
    </source>
</evidence>